<protein>
    <recommendedName>
        <fullName>Putative cytosolic acyl coenzyme A thioester hydrolase-like</fullName>
        <ecNumber>3.1.2.2</ecNumber>
    </recommendedName>
    <alternativeName>
        <fullName>Acyl-CoA thioesterase 7-like</fullName>
    </alternativeName>
</protein>
<name>BACHL_HUMAN</name>
<accession>Q6ZUV0</accession>
<evidence type="ECO:0000250" key="1"/>
<evidence type="ECO:0000255" key="2">
    <source>
        <dbReference type="PROSITE-ProRule" id="PRU01106"/>
    </source>
</evidence>
<evidence type="ECO:0000269" key="3">
    <source>
    </source>
</evidence>
<evidence type="ECO:0000305" key="4"/>
<gene>
    <name type="primary">ACOT7L</name>
    <name type="synonym">BACHL</name>
</gene>
<organism>
    <name type="scientific">Homo sapiens</name>
    <name type="common">Human</name>
    <dbReference type="NCBI Taxonomy" id="9606"/>
    <lineage>
        <taxon>Eukaryota</taxon>
        <taxon>Metazoa</taxon>
        <taxon>Chordata</taxon>
        <taxon>Craniata</taxon>
        <taxon>Vertebrata</taxon>
        <taxon>Euteleostomi</taxon>
        <taxon>Mammalia</taxon>
        <taxon>Eutheria</taxon>
        <taxon>Euarchontoglires</taxon>
        <taxon>Primates</taxon>
        <taxon>Haplorrhini</taxon>
        <taxon>Catarrhini</taxon>
        <taxon>Hominidae</taxon>
        <taxon>Homo</taxon>
    </lineage>
</organism>
<keyword id="KW-0963">Cytoplasm</keyword>
<keyword id="KW-0378">Hydrolase</keyword>
<keyword id="KW-0443">Lipid metabolism</keyword>
<keyword id="KW-1267">Proteomics identification</keyword>
<keyword id="KW-1185">Reference proteome</keyword>
<keyword id="KW-0677">Repeat</keyword>
<keyword id="KW-0719">Serine esterase</keyword>
<sequence length="252" mass="28164">MIKEAGAIISTRHCNPQNGDRCVAALARVECTHFLWPMCIGEVAHVSAEITYTSKHSVEVQVNMMSENILTGAKKLTNKATLWYAPLSLTNVDKVLEEPPVVYFRQEQEEEGQKRYKTQKLERMETNWRNGDIVQPVLNPEPNTVSYSQSSLIHLVGPSDCTLHSFVHEGVTMKVMDEVAGILAARHCKTNLVTASMEAINFDNKIRKGCIKTISGRMTFTSNKSVEIEVLVDADCVVDSSQKRYRAASVFT</sequence>
<feature type="chain" id="PRO_0000347058" description="Putative cytosolic acyl coenzyme A thioester hydrolase-like">
    <location>
        <begin position="1"/>
        <end position="252"/>
    </location>
</feature>
<feature type="domain" description="HotDog ACOT-type 1" evidence="2">
    <location>
        <begin position="1"/>
        <end position="90"/>
    </location>
</feature>
<feature type="domain" description="HotDog ACOT-type 2" evidence="2">
    <location>
        <begin position="146"/>
        <end position="252"/>
    </location>
</feature>
<reference key="1">
    <citation type="journal article" date="2004" name="Nat. Genet.">
        <title>Complete sequencing and characterization of 21,243 full-length human cDNAs.</title>
        <authorList>
            <person name="Ota T."/>
            <person name="Suzuki Y."/>
            <person name="Nishikawa T."/>
            <person name="Otsuki T."/>
            <person name="Sugiyama T."/>
            <person name="Irie R."/>
            <person name="Wakamatsu A."/>
            <person name="Hayashi K."/>
            <person name="Sato H."/>
            <person name="Nagai K."/>
            <person name="Kimura K."/>
            <person name="Makita H."/>
            <person name="Sekine M."/>
            <person name="Obayashi M."/>
            <person name="Nishi T."/>
            <person name="Shibahara T."/>
            <person name="Tanaka T."/>
            <person name="Ishii S."/>
            <person name="Yamamoto J."/>
            <person name="Saito K."/>
            <person name="Kawai Y."/>
            <person name="Isono Y."/>
            <person name="Nakamura Y."/>
            <person name="Nagahari K."/>
            <person name="Murakami K."/>
            <person name="Yasuda T."/>
            <person name="Iwayanagi T."/>
            <person name="Wagatsuma M."/>
            <person name="Shiratori A."/>
            <person name="Sudo H."/>
            <person name="Hosoiri T."/>
            <person name="Kaku Y."/>
            <person name="Kodaira H."/>
            <person name="Kondo H."/>
            <person name="Sugawara M."/>
            <person name="Takahashi M."/>
            <person name="Kanda K."/>
            <person name="Yokoi T."/>
            <person name="Furuya T."/>
            <person name="Kikkawa E."/>
            <person name="Omura Y."/>
            <person name="Abe K."/>
            <person name="Kamihara K."/>
            <person name="Katsuta N."/>
            <person name="Sato K."/>
            <person name="Tanikawa M."/>
            <person name="Yamazaki M."/>
            <person name="Ninomiya K."/>
            <person name="Ishibashi T."/>
            <person name="Yamashita H."/>
            <person name="Murakawa K."/>
            <person name="Fujimori K."/>
            <person name="Tanai H."/>
            <person name="Kimata M."/>
            <person name="Watanabe M."/>
            <person name="Hiraoka S."/>
            <person name="Chiba Y."/>
            <person name="Ishida S."/>
            <person name="Ono Y."/>
            <person name="Takiguchi S."/>
            <person name="Watanabe S."/>
            <person name="Yosida M."/>
            <person name="Hotuta T."/>
            <person name="Kusano J."/>
            <person name="Kanehori K."/>
            <person name="Takahashi-Fujii A."/>
            <person name="Hara H."/>
            <person name="Tanase T.-O."/>
            <person name="Nomura Y."/>
            <person name="Togiya S."/>
            <person name="Komai F."/>
            <person name="Hara R."/>
            <person name="Takeuchi K."/>
            <person name="Arita M."/>
            <person name="Imose N."/>
            <person name="Musashino K."/>
            <person name="Yuuki H."/>
            <person name="Oshima A."/>
            <person name="Sasaki N."/>
            <person name="Aotsuka S."/>
            <person name="Yoshikawa Y."/>
            <person name="Matsunawa H."/>
            <person name="Ichihara T."/>
            <person name="Shiohata N."/>
            <person name="Sano S."/>
            <person name="Moriya S."/>
            <person name="Momiyama H."/>
            <person name="Satoh N."/>
            <person name="Takami S."/>
            <person name="Terashima Y."/>
            <person name="Suzuki O."/>
            <person name="Nakagawa S."/>
            <person name="Senoh A."/>
            <person name="Mizoguchi H."/>
            <person name="Goto Y."/>
            <person name="Shimizu F."/>
            <person name="Wakebe H."/>
            <person name="Hishigaki H."/>
            <person name="Watanabe T."/>
            <person name="Sugiyama A."/>
            <person name="Takemoto M."/>
            <person name="Kawakami B."/>
            <person name="Yamazaki M."/>
            <person name="Watanabe K."/>
            <person name="Kumagai A."/>
            <person name="Itakura S."/>
            <person name="Fukuzumi Y."/>
            <person name="Fujimori Y."/>
            <person name="Komiyama M."/>
            <person name="Tashiro H."/>
            <person name="Tanigami A."/>
            <person name="Fujiwara T."/>
            <person name="Ono T."/>
            <person name="Yamada K."/>
            <person name="Fujii Y."/>
            <person name="Ozaki K."/>
            <person name="Hirao M."/>
            <person name="Ohmori Y."/>
            <person name="Kawabata A."/>
            <person name="Hikiji T."/>
            <person name="Kobatake N."/>
            <person name="Inagaki H."/>
            <person name="Ikema Y."/>
            <person name="Okamoto S."/>
            <person name="Okitani R."/>
            <person name="Kawakami T."/>
            <person name="Noguchi S."/>
            <person name="Itoh T."/>
            <person name="Shigeta K."/>
            <person name="Senba T."/>
            <person name="Matsumura K."/>
            <person name="Nakajima Y."/>
            <person name="Mizuno T."/>
            <person name="Morinaga M."/>
            <person name="Sasaki M."/>
            <person name="Togashi T."/>
            <person name="Oyama M."/>
            <person name="Hata H."/>
            <person name="Watanabe M."/>
            <person name="Komatsu T."/>
            <person name="Mizushima-Sugano J."/>
            <person name="Satoh T."/>
            <person name="Shirai Y."/>
            <person name="Takahashi Y."/>
            <person name="Nakagawa K."/>
            <person name="Okumura K."/>
            <person name="Nagase T."/>
            <person name="Nomura N."/>
            <person name="Kikuchi H."/>
            <person name="Masuho Y."/>
            <person name="Yamashita R."/>
            <person name="Nakai K."/>
            <person name="Yada T."/>
            <person name="Nakamura Y."/>
            <person name="Ohara O."/>
            <person name="Isogai T."/>
            <person name="Sugano S."/>
        </authorList>
    </citation>
    <scope>NUCLEOTIDE SEQUENCE [LARGE SCALE MRNA]</scope>
</reference>
<reference key="2">
    <citation type="journal article" date="2006" name="Cancer Res.">
        <title>A functional variant in the transcriptional regulatory region of gene LOC344967 cosegregates with disease phenotype in familial nasopharyngeal carcinoma.</title>
        <authorList>
            <person name="Jiang R.-C."/>
            <person name="Qin H.-D."/>
            <person name="Zeng M.-S."/>
            <person name="Huang W."/>
            <person name="Feng B.-J."/>
            <person name="Zhang F."/>
            <person name="Chen H.-K."/>
            <person name="Jia W.-H."/>
            <person name="Chen L.-Z."/>
            <person name="Feng Q.-S."/>
            <person name="Zhang R.-H."/>
            <person name="Yu X.-J."/>
            <person name="Zheng M.-Z."/>
            <person name="Zeng Y.-X."/>
        </authorList>
    </citation>
    <scope>TISSUE SPECIFICITY</scope>
    <scope>POSSIBLE INVOLVEMENT IN NASOPHARYNGEAL CARCINOMA</scope>
</reference>
<comment type="function">
    <text evidence="1">Acyl-CoA thioesterases are a group of enzymes that catalyze the hydrolysis of acyl-CoAs to the free fatty acid and coenzyme A (CoASH), providing the potential to regulate intracellular levels of acyl-CoAs, free fatty acids and CoASH.</text>
</comment>
<comment type="catalytic activity">
    <reaction>
        <text>hexadecanoyl-CoA + H2O = hexadecanoate + CoA + H(+)</text>
        <dbReference type="Rhea" id="RHEA:16645"/>
        <dbReference type="ChEBI" id="CHEBI:7896"/>
        <dbReference type="ChEBI" id="CHEBI:15377"/>
        <dbReference type="ChEBI" id="CHEBI:15378"/>
        <dbReference type="ChEBI" id="CHEBI:57287"/>
        <dbReference type="ChEBI" id="CHEBI:57379"/>
        <dbReference type="EC" id="3.1.2.2"/>
    </reaction>
</comment>
<comment type="subunit">
    <text evidence="4">Homodimer.</text>
</comment>
<comment type="subcellular location">
    <subcellularLocation>
        <location evidence="1">Cytoplasm</location>
    </subcellularLocation>
</comment>
<comment type="tissue specificity">
    <text evidence="3">Expressed in all tissues examined. Up-regulated in nasopharyngeal carcinoma (at protein level).</text>
</comment>
<comment type="disease">
    <text>A functional variant in the transcriptional regulatory region of in ACOT7L cosegregates with disease phenotype in family affected by nasopharyngeal carcinoma. The variant creates an AP1-binding site that significantly enhances binding of AP1 to the promoter, resulting in up-regulation.</text>
</comment>
<comment type="caution">
    <text evidence="4">Could be the product of a pseudogene. The peptide used to produce antibodies against ACOT7L matches at 85% with ACOT7 and the antibodies may not be specific to ACOT7L.</text>
</comment>
<proteinExistence type="uncertain"/>
<dbReference type="EC" id="3.1.2.2"/>
<dbReference type="EMBL" id="AK125299">
    <property type="protein sequence ID" value="BAC86118.1"/>
    <property type="molecule type" value="mRNA"/>
</dbReference>
<dbReference type="SMR" id="Q6ZUV0"/>
<dbReference type="FunCoup" id="Q6ZUV0">
    <property type="interactions" value="9"/>
</dbReference>
<dbReference type="GlyGen" id="Q6ZUV0">
    <property type="glycosylation" value="2 sites, 1 O-linked glycan (2 sites)"/>
</dbReference>
<dbReference type="BioMuta" id="ACOT7L"/>
<dbReference type="jPOST" id="Q6ZUV0"/>
<dbReference type="MassIVE" id="Q6ZUV0"/>
<dbReference type="ProteomicsDB" id="68371"/>
<dbReference type="MIM" id="611963">
    <property type="type" value="gene"/>
</dbReference>
<dbReference type="neXtProt" id="NX_Q6ZUV0"/>
<dbReference type="InParanoid" id="Q6ZUV0"/>
<dbReference type="PAN-GO" id="Q6ZUV0">
    <property type="GO annotations" value="6 GO annotations based on evolutionary models"/>
</dbReference>
<dbReference type="PhylomeDB" id="Q6ZUV0"/>
<dbReference type="BioCyc" id="MetaCyc:G66-33733-MONOMER"/>
<dbReference type="PathwayCommons" id="Q6ZUV0"/>
<dbReference type="Reactome" id="R-HSA-77289">
    <property type="pathway name" value="Mitochondrial Fatty Acid Beta-Oxidation"/>
</dbReference>
<dbReference type="Pharos" id="Q6ZUV0">
    <property type="development level" value="Tdark"/>
</dbReference>
<dbReference type="PRO" id="PR:Q6ZUV0"/>
<dbReference type="Proteomes" id="UP000005640">
    <property type="component" value="Unplaced"/>
</dbReference>
<dbReference type="RNAct" id="Q6ZUV0">
    <property type="molecule type" value="protein"/>
</dbReference>
<dbReference type="GO" id="GO:0005737">
    <property type="term" value="C:cytoplasm"/>
    <property type="evidence" value="ECO:0000318"/>
    <property type="project" value="GO_Central"/>
</dbReference>
<dbReference type="GO" id="GO:0005829">
    <property type="term" value="C:cytosol"/>
    <property type="evidence" value="ECO:0000318"/>
    <property type="project" value="GO_Central"/>
</dbReference>
<dbReference type="GO" id="GO:0052689">
    <property type="term" value="F:carboxylic ester hydrolase activity"/>
    <property type="evidence" value="ECO:0007669"/>
    <property type="project" value="UniProtKB-KW"/>
</dbReference>
<dbReference type="GO" id="GO:0052816">
    <property type="term" value="F:long-chain fatty acyl-CoA hydrolase activity"/>
    <property type="evidence" value="ECO:0000318"/>
    <property type="project" value="GO_Central"/>
</dbReference>
<dbReference type="GO" id="GO:0006637">
    <property type="term" value="P:acyl-CoA metabolic process"/>
    <property type="evidence" value="ECO:0000318"/>
    <property type="project" value="GO_Central"/>
</dbReference>
<dbReference type="GO" id="GO:0009062">
    <property type="term" value="P:fatty acid catabolic process"/>
    <property type="evidence" value="ECO:0000318"/>
    <property type="project" value="GO_Central"/>
</dbReference>
<dbReference type="CDD" id="cd03442">
    <property type="entry name" value="BFIT_BACH"/>
    <property type="match status" value="1"/>
</dbReference>
<dbReference type="FunFam" id="3.10.129.10:FF:000009">
    <property type="entry name" value="Cytosolic acyl coenzyme A thioester hydrolase"/>
    <property type="match status" value="1"/>
</dbReference>
<dbReference type="FunFam" id="3.10.129.10:FF:000010">
    <property type="entry name" value="Cytosolic acyl coenzyme A thioester hydrolase"/>
    <property type="match status" value="1"/>
</dbReference>
<dbReference type="Gene3D" id="3.10.129.10">
    <property type="entry name" value="Hotdog Thioesterase"/>
    <property type="match status" value="2"/>
</dbReference>
<dbReference type="InterPro" id="IPR040170">
    <property type="entry name" value="Cytosol_ACT"/>
</dbReference>
<dbReference type="InterPro" id="IPR033120">
    <property type="entry name" value="HOTDOG_ACOT"/>
</dbReference>
<dbReference type="InterPro" id="IPR029069">
    <property type="entry name" value="HotDog_dom_sf"/>
</dbReference>
<dbReference type="InterPro" id="IPR006683">
    <property type="entry name" value="Thioestr_dom"/>
</dbReference>
<dbReference type="PANTHER" id="PTHR11049">
    <property type="entry name" value="ACYL COENZYME A THIOESTER HYDROLASE"/>
    <property type="match status" value="1"/>
</dbReference>
<dbReference type="PANTHER" id="PTHR11049:SF29">
    <property type="entry name" value="CYTOSOLIC ACYL COENZYME A THIOESTER HYDROLASE-LIKE-RELATED"/>
    <property type="match status" value="1"/>
</dbReference>
<dbReference type="Pfam" id="PF03061">
    <property type="entry name" value="4HBT"/>
    <property type="match status" value="2"/>
</dbReference>
<dbReference type="SUPFAM" id="SSF54637">
    <property type="entry name" value="Thioesterase/thiol ester dehydrase-isomerase"/>
    <property type="match status" value="2"/>
</dbReference>
<dbReference type="PROSITE" id="PS51770">
    <property type="entry name" value="HOTDOG_ACOT"/>
    <property type="match status" value="2"/>
</dbReference>